<organism evidence="10">
    <name type="scientific">Nematostella vectensis</name>
    <name type="common">Starlet sea anemone</name>
    <dbReference type="NCBI Taxonomy" id="45351"/>
    <lineage>
        <taxon>Eukaryota</taxon>
        <taxon>Metazoa</taxon>
        <taxon>Cnidaria</taxon>
        <taxon>Anthozoa</taxon>
        <taxon>Hexacorallia</taxon>
        <taxon>Actiniaria</taxon>
        <taxon>Edwardsiidae</taxon>
        <taxon>Nematostella</taxon>
    </lineage>
</organism>
<sequence>MGRGQIIMILVGLLCLANESYSDVIAKSSLQMCENTGNSDDPYNVVDQKACEKKLIVTLSVRSGQNGTEFLKAVTNVSKVYDQTEKEMARLYNPFIITLAKTPVKLTYPYYYLAMVNNKPTERVVISDSKWHASGSYHACSDAWDDEDALCGFYTDAEGKPIWDSQGFCCRCTEQEKWRGSFNDKNPYSRAGINCKLFGTQAAAHCMTFDDLWYTVNEVGLWQMDFSIHVKAYDLVVEKVGNKTQSKWVDGGEIVIGPTIRSGVGVHGRLHATFIGEFQSHKQFPVLTTKYLLIPYVSEKVDPKTHPQFRNGPHDYMLIDKHEVNYKSSGPHECDKIGVSFSAFRAQAPMGCSQKQGDCLHNQPKDYFEEDTKRRASGKTPYYFPQKFGKLLGVNQRKDNNHFVLTYEVDEVMTSMVTLQISADDVILIYNRAEGKILRAYAQDFEALSRDGNLYVIVQNIGLVTADFYVVIKECSVGIGKLLEKAASINPQQTHSFTFSVKAQQWKGGDNFCIVQLYDARRKMVDSSNVTFRTTEPCVCASSCGCSCFKNGFKCTKREDRDFTKTKPKDSGLDLGFFPKLWNKIKNVWDTVTSVFNFMESGWALLGTALGLLSLGGLKAFLGFRKTGSRIARFGFGGANKGRVRRRDGSGRMVTMEFNETGDRIDPETKEVIEPRNKKKELLLNLFFFFILPFLLIYHLVGWIRWRMRKPGSEDEEQAGTGDEQGGASPLHNIEARAAVDQFLQPDTIVYHSYSQDDYVAQFLINPGKRFCMAGRMTSLSGPSADQFRFDLLQAIQIYEVIDNKRRRLESVNSLNAHYFSRLLNAEAMIDCLSLKPAFPCLNVNRKRKPKQK</sequence>
<feature type="signal peptide" evidence="2">
    <location>
        <begin position="1"/>
        <end position="22"/>
    </location>
</feature>
<feature type="chain" id="PRO_5002714433" description="Hapless 2">
    <location>
        <begin position="23"/>
        <end position="853"/>
    </location>
</feature>
<feature type="topological domain" description="Extracellular" evidence="7">
    <location>
        <begin position="23"/>
        <end position="603"/>
    </location>
</feature>
<feature type="transmembrane region" description="Helical" evidence="2">
    <location>
        <begin position="604"/>
        <end position="624"/>
    </location>
</feature>
<feature type="topological domain" description="Cytoplasmic" evidence="7">
    <location>
        <begin position="625"/>
        <end position="853"/>
    </location>
</feature>
<feature type="glycosylation site" description="N-linked (GlcNAc...) asparagine" evidence="3">
    <location>
        <position position="529"/>
    </location>
</feature>
<feature type="disulfide bond" evidence="1">
    <location>
        <begin position="33"/>
        <end position="51"/>
    </location>
</feature>
<feature type="disulfide bond" evidence="1">
    <location>
        <begin position="151"/>
        <end position="206"/>
    </location>
</feature>
<feature type="disulfide bond" evidence="1">
    <location>
        <begin position="170"/>
        <end position="352"/>
    </location>
</feature>
<feature type="disulfide bond" evidence="1">
    <location>
        <begin position="172"/>
        <end position="195"/>
    </location>
</feature>
<feature type="disulfide bond" evidence="1">
    <location>
        <begin position="334"/>
        <end position="359"/>
    </location>
</feature>
<feature type="disulfide bond" evidence="1">
    <location>
        <begin position="475"/>
        <end position="513"/>
    </location>
</feature>
<reference key="1">
    <citation type="journal article" date="2014" name="Biochem. Biophys. Res. Commun.">
        <title>Evidence for participation of GCS1 in fertilization of the starlet sea anemone Nematostella vectensis: implication of a common mechanism of sperm-egg fusion in plants and animals.</title>
        <authorList>
            <person name="Ebchuqin E."/>
            <person name="Yokota N."/>
            <person name="Yamada L."/>
            <person name="Yasuoka Y."/>
            <person name="Akasaka M."/>
            <person name="Arakawa M."/>
            <person name="Deguchi R."/>
            <person name="Mori T."/>
            <person name="Sawada H."/>
        </authorList>
    </citation>
    <scope>NUCLEOTIDE SEQUENCE [MRNA]</scope>
    <scope>FUNCTION</scope>
    <scope>SUBCELLULAR LOCATION</scope>
    <scope>TISSUE SPECIFICITY</scope>
    <scope>IDENTIFICATION BY MASS SPECTROMETRY</scope>
</reference>
<reference evidence="9 10" key="2">
    <citation type="journal article" date="2007" name="Science">
        <title>Sea anemone genome reveals ancestral eumetazoan gene repertoire and genomic organization.</title>
        <authorList>
            <person name="Putnam N.H."/>
            <person name="Srivastava M."/>
            <person name="Hellsten U."/>
            <person name="Dirks B."/>
            <person name="Chapman J."/>
            <person name="Salamov A."/>
            <person name="Terry A."/>
            <person name="Shapiro H."/>
            <person name="Lindquist E."/>
            <person name="Kapitonov V.V."/>
            <person name="Jurka J."/>
            <person name="Genikhovich G."/>
            <person name="Grigoriev I.V."/>
            <person name="Lucas S.M."/>
            <person name="Steele R.E."/>
            <person name="Finnerty J.R."/>
            <person name="Technau U."/>
            <person name="Martindale M.Q."/>
            <person name="Rokhsar D.S."/>
        </authorList>
    </citation>
    <scope>NUCLEOTIDE SEQUENCE [LARGE SCALE GENOMIC DNA]</scope>
    <source>
        <strain evidence="10">CH2 X CH6</strain>
    </source>
</reference>
<reference key="3">
    <citation type="journal article" date="2010" name="Trends Cell Biol.">
        <title>Is HAP2-GCS1 an ancestral gamete fusogen?</title>
        <authorList>
            <person name="Wong J.L."/>
            <person name="Johnson M.A."/>
        </authorList>
    </citation>
    <scope>REVIEW</scope>
</reference>
<gene>
    <name type="primary">HAP2</name>
    <name evidence="6" type="synonym">GCS1</name>
    <name evidence="9" type="ORF">v1g212848</name>
</gene>
<accession>A7SIM4</accession>
<dbReference type="EMBL" id="DS469670">
    <property type="protein sequence ID" value="EDO36432.1"/>
    <property type="molecule type" value="Genomic_DNA"/>
</dbReference>
<dbReference type="SMR" id="A7SIM4"/>
<dbReference type="GlyCosmos" id="A7SIM4">
    <property type="glycosylation" value="1 site, No reported glycans"/>
</dbReference>
<dbReference type="EnsemblMetazoa" id="EDO36432">
    <property type="protein sequence ID" value="EDO36432"/>
    <property type="gene ID" value="NEMVEDRAFT_v1g212848"/>
</dbReference>
<dbReference type="GeneID" id="5507857"/>
<dbReference type="KEGG" id="nve:5507857"/>
<dbReference type="eggNOG" id="ENOG502QREH">
    <property type="taxonomic scope" value="Eukaryota"/>
</dbReference>
<dbReference type="HOGENOM" id="CLU_334718_0_0_1"/>
<dbReference type="InParanoid" id="A7SIM4"/>
<dbReference type="OMA" id="HECDKIG"/>
<dbReference type="OrthoDB" id="44061at2759"/>
<dbReference type="PhylomeDB" id="A7SIM4"/>
<dbReference type="Proteomes" id="UP000001593">
    <property type="component" value="Unassembled WGS sequence"/>
</dbReference>
<dbReference type="GO" id="GO:0005886">
    <property type="term" value="C:plasma membrane"/>
    <property type="evidence" value="ECO:0007669"/>
    <property type="project" value="UniProtKB-SubCell"/>
</dbReference>
<dbReference type="GO" id="GO:0008289">
    <property type="term" value="F:lipid binding"/>
    <property type="evidence" value="ECO:0007669"/>
    <property type="project" value="UniProtKB-KW"/>
</dbReference>
<dbReference type="GO" id="GO:0007338">
    <property type="term" value="P:single fertilization"/>
    <property type="evidence" value="ECO:0007669"/>
    <property type="project" value="UniProtKB-KW"/>
</dbReference>
<dbReference type="InterPro" id="IPR040326">
    <property type="entry name" value="HAP2/GCS1"/>
</dbReference>
<dbReference type="InterPro" id="IPR018928">
    <property type="entry name" value="HAP2/GCS1_dom"/>
</dbReference>
<dbReference type="PANTHER" id="PTHR31764:SF0">
    <property type="entry name" value="GENERATIVE CELL SPECIFIC-1_HAP2 DOMAIN-CONTAINING PROTEIN"/>
    <property type="match status" value="1"/>
</dbReference>
<dbReference type="PANTHER" id="PTHR31764">
    <property type="entry name" value="PROTEIN HAPLESS 2"/>
    <property type="match status" value="1"/>
</dbReference>
<dbReference type="Pfam" id="PF10699">
    <property type="entry name" value="HAP2-GCS1"/>
    <property type="match status" value="1"/>
</dbReference>
<protein>
    <recommendedName>
        <fullName>Hapless 2</fullName>
    </recommendedName>
    <alternativeName>
        <fullName evidence="6">Generative cell specific 1</fullName>
    </alternativeName>
</protein>
<comment type="function">
    <text evidence="4 5">During fertilization, required on male gametes for their fusion with female gametes (PubMed:25111819). Probably initiates the fusion of gamete cell membranes by inserting part of its extracellular domain into the cell membrane of a female gamete (PubMed:20080406).</text>
</comment>
<comment type="subcellular location">
    <subcellularLocation>
        <location evidence="8">Cell membrane</location>
        <topology evidence="2">Single-pass type I membrane protein</topology>
    </subcellularLocation>
</comment>
<comment type="tissue specificity">
    <text evidence="4">Detected in sperm (at protein level). Detected in testis seminal ducts.</text>
</comment>
<comment type="miscellaneous">
    <text evidence="5">HAP2/GCS1 family members mediate membrane fusion between gametes in a broad range of eukaryotes, ranging from algae and higher plants to protozoans and cnidaria, suggesting they are derived from an ancestral gamete fusogen. They function similar to viral fusogens, by inserting part of their extracellular domain into the lipid bilayer of an adjoining cell.</text>
</comment>
<comment type="similarity">
    <text evidence="7">Belongs to the HAP2/GCS1 family.</text>
</comment>
<proteinExistence type="evidence at protein level"/>
<evidence type="ECO:0000250" key="1">
    <source>
        <dbReference type="UniProtKB" id="A4GRC6"/>
    </source>
</evidence>
<evidence type="ECO:0000255" key="2"/>
<evidence type="ECO:0000255" key="3">
    <source>
        <dbReference type="PROSITE-ProRule" id="PRU00498"/>
    </source>
</evidence>
<evidence type="ECO:0000269" key="4">
    <source>
    </source>
</evidence>
<evidence type="ECO:0000303" key="5">
    <source>
    </source>
</evidence>
<evidence type="ECO:0000303" key="6">
    <source>
    </source>
</evidence>
<evidence type="ECO:0000305" key="7"/>
<evidence type="ECO:0000305" key="8">
    <source>
    </source>
</evidence>
<evidence type="ECO:0000312" key="9">
    <source>
        <dbReference type="EMBL" id="EDO36432.1"/>
    </source>
</evidence>
<evidence type="ECO:0000312" key="10">
    <source>
        <dbReference type="Proteomes" id="UP000001593"/>
    </source>
</evidence>
<name>HAP2_NEMVE</name>
<keyword id="KW-1003">Cell membrane</keyword>
<keyword id="KW-1015">Disulfide bond</keyword>
<keyword id="KW-0278">Fertilization</keyword>
<keyword id="KW-0325">Glycoprotein</keyword>
<keyword id="KW-0446">Lipid-binding</keyword>
<keyword id="KW-0472">Membrane</keyword>
<keyword id="KW-1185">Reference proteome</keyword>
<keyword id="KW-0732">Signal</keyword>
<keyword id="KW-0812">Transmembrane</keyword>
<keyword id="KW-1133">Transmembrane helix</keyword>